<proteinExistence type="evidence at transcript level"/>
<accession>Q43086</accession>
<comment type="function">
    <text evidence="1">Catalyzes the condensation of carbamoyl phosphate and aspartate to form carbamoyl aspartate and inorganic phosphate, the committed step in the de novo pyrimidine nucleotide biosynthesis pathway.</text>
</comment>
<comment type="catalytic activity">
    <reaction evidence="1">
        <text>carbamoyl phosphate + L-aspartate = N-carbamoyl-L-aspartate + phosphate + H(+)</text>
        <dbReference type="Rhea" id="RHEA:20013"/>
        <dbReference type="ChEBI" id="CHEBI:15378"/>
        <dbReference type="ChEBI" id="CHEBI:29991"/>
        <dbReference type="ChEBI" id="CHEBI:32814"/>
        <dbReference type="ChEBI" id="CHEBI:43474"/>
        <dbReference type="ChEBI" id="CHEBI:58228"/>
        <dbReference type="EC" id="2.1.3.2"/>
    </reaction>
</comment>
<comment type="activity regulation">
    <text evidence="2">Feedback inhibited by UMP.</text>
</comment>
<comment type="pathway">
    <text evidence="1">Pyrimidine metabolism; UMP biosynthesis via de novo pathway; (S)-dihydroorotate from bicarbonate: step 2/3.</text>
</comment>
<comment type="subunit">
    <text evidence="5">Homotrimer.</text>
</comment>
<comment type="subcellular location">
    <subcellularLocation>
        <location>Plastid</location>
        <location>Chloroplast</location>
    </subcellularLocation>
</comment>
<comment type="similarity">
    <text evidence="4">Belongs to the aspartate/ornithine carbamoyltransferase superfamily. ATCase family.</text>
</comment>
<name>PYRB1_PEA</name>
<protein>
    <recommendedName>
        <fullName>Aspartate carbamoyltransferase 1, chloroplastic</fullName>
        <ecNumber evidence="1">2.1.3.2</ecNumber>
    </recommendedName>
    <alternativeName>
        <fullName>Aspartate transcarbamylase 1</fullName>
        <shortName>ATCase 1</shortName>
    </alternativeName>
</protein>
<gene>
    <name type="primary">PYRB1</name>
</gene>
<reference key="1">
    <citation type="journal article" date="1994" name="Plant Physiol.">
        <title>Molecular cloning and characterization of the pyrB1 and pyrB2 genes encoding aspartate transcarbamoylase in pea (Pisum sativum L.).</title>
        <authorList>
            <person name="Williamson C.L."/>
            <person name="Slocum R.D."/>
        </authorList>
    </citation>
    <scope>NUCLEOTIDE SEQUENCE [MRNA]</scope>
    <source>
        <strain>cv. Wando</strain>
        <tissue>Leaf</tissue>
    </source>
</reference>
<keyword id="KW-0021">Allosteric enzyme</keyword>
<keyword id="KW-0150">Chloroplast</keyword>
<keyword id="KW-0934">Plastid</keyword>
<keyword id="KW-0665">Pyrimidine biosynthesis</keyword>
<keyword id="KW-0808">Transferase</keyword>
<keyword id="KW-0809">Transit peptide</keyword>
<feature type="transit peptide" description="Chloroplast" evidence="3">
    <location>
        <begin position="1"/>
        <end position="39"/>
    </location>
</feature>
<feature type="chain" id="PRO_0000020349" description="Aspartate carbamoyltransferase 1, chloroplastic">
    <location>
        <begin position="40"/>
        <end position="386"/>
    </location>
</feature>
<feature type="binding site" evidence="1">
    <location>
        <position position="132"/>
    </location>
    <ligand>
        <name>carbamoyl phosphate</name>
        <dbReference type="ChEBI" id="CHEBI:58228"/>
    </ligand>
</feature>
<feature type="binding site" evidence="2">
    <location>
        <position position="132"/>
    </location>
    <ligand>
        <name>UMP</name>
        <dbReference type="ChEBI" id="CHEBI:57865"/>
        <note>inhibitor</note>
    </ligand>
</feature>
<feature type="binding site" evidence="1">
    <location>
        <position position="133"/>
    </location>
    <ligand>
        <name>carbamoyl phosphate</name>
        <dbReference type="ChEBI" id="CHEBI:58228"/>
    </ligand>
</feature>
<feature type="binding site" evidence="2">
    <location>
        <position position="133"/>
    </location>
    <ligand>
        <name>UMP</name>
        <dbReference type="ChEBI" id="CHEBI:57865"/>
        <note>inhibitor</note>
    </ligand>
</feature>
<feature type="binding site" evidence="1">
    <location>
        <position position="162"/>
    </location>
    <ligand>
        <name>L-aspartate</name>
        <dbReference type="ChEBI" id="CHEBI:29991"/>
    </ligand>
</feature>
<feature type="binding site" evidence="1">
    <location>
        <position position="183"/>
    </location>
    <ligand>
        <name>carbamoyl phosphate</name>
        <dbReference type="ChEBI" id="CHEBI:58228"/>
    </ligand>
</feature>
<feature type="binding site" evidence="2">
    <location>
        <position position="183"/>
    </location>
    <ligand>
        <name>UMP</name>
        <dbReference type="ChEBI" id="CHEBI:57865"/>
        <note>inhibitor</note>
    </ligand>
</feature>
<feature type="binding site" evidence="1">
    <location>
        <position position="211"/>
    </location>
    <ligand>
        <name>carbamoyl phosphate</name>
        <dbReference type="ChEBI" id="CHEBI:58228"/>
    </ligand>
</feature>
<feature type="binding site" evidence="2">
    <location>
        <position position="211"/>
    </location>
    <ligand>
        <name>UMP</name>
        <dbReference type="ChEBI" id="CHEBI:57865"/>
        <note>inhibitor</note>
    </ligand>
</feature>
<feature type="binding site" evidence="1">
    <location>
        <position position="214"/>
    </location>
    <ligand>
        <name>carbamoyl phosphate</name>
        <dbReference type="ChEBI" id="CHEBI:58228"/>
    </ligand>
</feature>
<feature type="binding site" evidence="1">
    <location>
        <position position="244"/>
    </location>
    <ligand>
        <name>L-aspartate</name>
        <dbReference type="ChEBI" id="CHEBI:29991"/>
    </ligand>
</feature>
<feature type="binding site" evidence="2">
    <location>
        <position position="244"/>
    </location>
    <ligand>
        <name>UMP</name>
        <dbReference type="ChEBI" id="CHEBI:57865"/>
        <note>inhibitor</note>
    </ligand>
</feature>
<feature type="binding site" evidence="1">
    <location>
        <position position="306"/>
    </location>
    <ligand>
        <name>L-aspartate</name>
        <dbReference type="ChEBI" id="CHEBI:29991"/>
    </ligand>
</feature>
<feature type="binding site" evidence="2">
    <location>
        <position position="306"/>
    </location>
    <ligand>
        <name>UMP</name>
        <dbReference type="ChEBI" id="CHEBI:57865"/>
        <note>inhibitor</note>
    </ligand>
</feature>
<feature type="binding site" evidence="1">
    <location>
        <position position="346"/>
    </location>
    <ligand>
        <name>carbamoyl phosphate</name>
        <dbReference type="ChEBI" id="CHEBI:58228"/>
    </ligand>
</feature>
<feature type="binding site" evidence="1">
    <location>
        <position position="347"/>
    </location>
    <ligand>
        <name>carbamoyl phosphate</name>
        <dbReference type="ChEBI" id="CHEBI:58228"/>
    </ligand>
</feature>
<sequence length="386" mass="42618">MTVASMLSSNSMNVGVSNPKMSSKTSACCLLNRPWPSSCSMSISSCGQFGVSEKSKLLCGAGALQVESAPLFSVGQKFQLDDVIEAQQFDRETLSAIFEVARSMENIRGNSSGSQMLKGYLMATLFYEPSTRTRLSFESAMKRLGGDVLTTENAREFSSAAKGETLEDTIRTVEGYSDIIVLRHFESGAARRAAATANIPVINAGDGPGQHPSQALLDVYTIEREIGKLDGIKVGLVGDLANGRTVRSLAYLLAKYRDVKLYFVSPNVVKMKDDIKEYLTSKGVEWEESSDLMEVASKCDVVYQTRIQKERFGEKLNLYEEARGKYIVNQDVLKVMQNHAVVMHPLPKLDEIEADVDNDPRAAYFRQAKNGLYIRMALLKVLLLGW</sequence>
<organism>
    <name type="scientific">Pisum sativum</name>
    <name type="common">Garden pea</name>
    <name type="synonym">Lathyrus oleraceus</name>
    <dbReference type="NCBI Taxonomy" id="3888"/>
    <lineage>
        <taxon>Eukaryota</taxon>
        <taxon>Viridiplantae</taxon>
        <taxon>Streptophyta</taxon>
        <taxon>Embryophyta</taxon>
        <taxon>Tracheophyta</taxon>
        <taxon>Spermatophyta</taxon>
        <taxon>Magnoliopsida</taxon>
        <taxon>eudicotyledons</taxon>
        <taxon>Gunneridae</taxon>
        <taxon>Pentapetalae</taxon>
        <taxon>rosids</taxon>
        <taxon>fabids</taxon>
        <taxon>Fabales</taxon>
        <taxon>Fabaceae</taxon>
        <taxon>Papilionoideae</taxon>
        <taxon>50 kb inversion clade</taxon>
        <taxon>NPAAA clade</taxon>
        <taxon>Hologalegina</taxon>
        <taxon>IRL clade</taxon>
        <taxon>Fabeae</taxon>
        <taxon>Pisum</taxon>
    </lineage>
</organism>
<evidence type="ECO:0000250" key="1">
    <source>
        <dbReference type="UniProtKB" id="P0A786"/>
    </source>
</evidence>
<evidence type="ECO:0000250" key="2">
    <source>
        <dbReference type="UniProtKB" id="P49077"/>
    </source>
</evidence>
<evidence type="ECO:0000255" key="3"/>
<evidence type="ECO:0000305" key="4"/>
<evidence type="ECO:0000305" key="5">
    <source>
    </source>
</evidence>
<dbReference type="EC" id="2.1.3.2" evidence="1"/>
<dbReference type="EMBL" id="M96981">
    <property type="protein sequence ID" value="AAA62443.1"/>
    <property type="molecule type" value="mRNA"/>
</dbReference>
<dbReference type="PIR" id="T06484">
    <property type="entry name" value="T06484"/>
</dbReference>
<dbReference type="SMR" id="Q43086"/>
<dbReference type="EnsemblPlants" id="Psat2g012520.1">
    <property type="protein sequence ID" value="Psat2g012520.1.cds"/>
    <property type="gene ID" value="Psat2g012520"/>
</dbReference>
<dbReference type="EnsemblPlants" id="Psat2g012520.2">
    <property type="protein sequence ID" value="Psat2g012520.2.cds"/>
    <property type="gene ID" value="Psat2g012520"/>
</dbReference>
<dbReference type="Gramene" id="Psat2g012520.1">
    <property type="protein sequence ID" value="Psat2g012520.1.cds"/>
    <property type="gene ID" value="Psat2g012520"/>
</dbReference>
<dbReference type="Gramene" id="Psat2g012520.2">
    <property type="protein sequence ID" value="Psat2g012520.2.cds"/>
    <property type="gene ID" value="Psat2g012520"/>
</dbReference>
<dbReference type="OrthoDB" id="1924069at2759"/>
<dbReference type="UniPathway" id="UPA00070">
    <property type="reaction ID" value="UER00116"/>
</dbReference>
<dbReference type="GO" id="GO:0009507">
    <property type="term" value="C:chloroplast"/>
    <property type="evidence" value="ECO:0007669"/>
    <property type="project" value="UniProtKB-SubCell"/>
</dbReference>
<dbReference type="GO" id="GO:0016597">
    <property type="term" value="F:amino acid binding"/>
    <property type="evidence" value="ECO:0007669"/>
    <property type="project" value="InterPro"/>
</dbReference>
<dbReference type="GO" id="GO:0004070">
    <property type="term" value="F:aspartate carbamoyltransferase activity"/>
    <property type="evidence" value="ECO:0007669"/>
    <property type="project" value="UniProtKB-EC"/>
</dbReference>
<dbReference type="GO" id="GO:0006207">
    <property type="term" value="P:'de novo' pyrimidine nucleobase biosynthetic process"/>
    <property type="evidence" value="ECO:0007669"/>
    <property type="project" value="InterPro"/>
</dbReference>
<dbReference type="GO" id="GO:0044205">
    <property type="term" value="P:'de novo' UMP biosynthetic process"/>
    <property type="evidence" value="ECO:0007669"/>
    <property type="project" value="UniProtKB-UniPathway"/>
</dbReference>
<dbReference type="GO" id="GO:0006520">
    <property type="term" value="P:amino acid metabolic process"/>
    <property type="evidence" value="ECO:0007669"/>
    <property type="project" value="InterPro"/>
</dbReference>
<dbReference type="FunFam" id="3.40.50.1370:FF:000001">
    <property type="entry name" value="Aspartate carbamoyltransferase"/>
    <property type="match status" value="1"/>
</dbReference>
<dbReference type="FunFam" id="3.40.50.1370:FF:000002">
    <property type="entry name" value="Aspartate carbamoyltransferase 2"/>
    <property type="match status" value="1"/>
</dbReference>
<dbReference type="Gene3D" id="3.40.50.1370">
    <property type="entry name" value="Aspartate/ornithine carbamoyltransferase"/>
    <property type="match status" value="2"/>
</dbReference>
<dbReference type="HAMAP" id="MF_00001">
    <property type="entry name" value="Asp_carb_tr"/>
    <property type="match status" value="1"/>
</dbReference>
<dbReference type="InterPro" id="IPR006132">
    <property type="entry name" value="Asp/Orn_carbamoyltranf_P-bd"/>
</dbReference>
<dbReference type="InterPro" id="IPR006130">
    <property type="entry name" value="Asp/Orn_carbamoylTrfase"/>
</dbReference>
<dbReference type="InterPro" id="IPR036901">
    <property type="entry name" value="Asp/Orn_carbamoylTrfase_sf"/>
</dbReference>
<dbReference type="InterPro" id="IPR002082">
    <property type="entry name" value="Asp_carbamoyltransf"/>
</dbReference>
<dbReference type="InterPro" id="IPR006131">
    <property type="entry name" value="Asp_carbamoyltransf_Asp/Orn-bd"/>
</dbReference>
<dbReference type="NCBIfam" id="TIGR00670">
    <property type="entry name" value="asp_carb_tr"/>
    <property type="match status" value="1"/>
</dbReference>
<dbReference type="NCBIfam" id="NF002032">
    <property type="entry name" value="PRK00856.1"/>
    <property type="match status" value="1"/>
</dbReference>
<dbReference type="PANTHER" id="PTHR45753:SF6">
    <property type="entry name" value="ASPARTATE CARBAMOYLTRANSFERASE"/>
    <property type="match status" value="1"/>
</dbReference>
<dbReference type="PANTHER" id="PTHR45753">
    <property type="entry name" value="ORNITHINE CARBAMOYLTRANSFERASE, MITOCHONDRIAL"/>
    <property type="match status" value="1"/>
</dbReference>
<dbReference type="Pfam" id="PF00185">
    <property type="entry name" value="OTCace"/>
    <property type="match status" value="1"/>
</dbReference>
<dbReference type="Pfam" id="PF02729">
    <property type="entry name" value="OTCace_N"/>
    <property type="match status" value="1"/>
</dbReference>
<dbReference type="PRINTS" id="PR00100">
    <property type="entry name" value="AOTCASE"/>
</dbReference>
<dbReference type="PRINTS" id="PR00101">
    <property type="entry name" value="ATCASE"/>
</dbReference>
<dbReference type="SUPFAM" id="SSF53671">
    <property type="entry name" value="Aspartate/ornithine carbamoyltransferase"/>
    <property type="match status" value="1"/>
</dbReference>
<dbReference type="PROSITE" id="PS00097">
    <property type="entry name" value="CARBAMOYLTRANSFERASE"/>
    <property type="match status" value="1"/>
</dbReference>